<gene>
    <name evidence="1" type="primary">carA</name>
    <name type="ordered locus">BR1483</name>
    <name type="ordered locus">BS1330_I1477</name>
</gene>
<protein>
    <recommendedName>
        <fullName evidence="1">Carbamoyl phosphate synthase small chain</fullName>
        <ecNumber evidence="1">6.3.5.5</ecNumber>
    </recommendedName>
    <alternativeName>
        <fullName evidence="1">Carbamoyl phosphate synthetase glutamine chain</fullName>
    </alternativeName>
</protein>
<comment type="function">
    <text evidence="1">Small subunit of the glutamine-dependent carbamoyl phosphate synthetase (CPSase). CPSase catalyzes the formation of carbamoyl phosphate from the ammonia moiety of glutamine, carbonate, and phosphate donated by ATP, constituting the first step of 2 biosynthetic pathways, one leading to arginine and/or urea and the other to pyrimidine nucleotides. The small subunit (glutamine amidotransferase) binds and cleaves glutamine to supply the large subunit with the substrate ammonia.</text>
</comment>
<comment type="catalytic activity">
    <reaction evidence="1">
        <text>hydrogencarbonate + L-glutamine + 2 ATP + H2O = carbamoyl phosphate + L-glutamate + 2 ADP + phosphate + 2 H(+)</text>
        <dbReference type="Rhea" id="RHEA:18633"/>
        <dbReference type="ChEBI" id="CHEBI:15377"/>
        <dbReference type="ChEBI" id="CHEBI:15378"/>
        <dbReference type="ChEBI" id="CHEBI:17544"/>
        <dbReference type="ChEBI" id="CHEBI:29985"/>
        <dbReference type="ChEBI" id="CHEBI:30616"/>
        <dbReference type="ChEBI" id="CHEBI:43474"/>
        <dbReference type="ChEBI" id="CHEBI:58228"/>
        <dbReference type="ChEBI" id="CHEBI:58359"/>
        <dbReference type="ChEBI" id="CHEBI:456216"/>
        <dbReference type="EC" id="6.3.5.5"/>
    </reaction>
</comment>
<comment type="catalytic activity">
    <molecule>Carbamoyl phosphate synthase small chain</molecule>
    <reaction evidence="1">
        <text>L-glutamine + H2O = L-glutamate + NH4(+)</text>
        <dbReference type="Rhea" id="RHEA:15889"/>
        <dbReference type="ChEBI" id="CHEBI:15377"/>
        <dbReference type="ChEBI" id="CHEBI:28938"/>
        <dbReference type="ChEBI" id="CHEBI:29985"/>
        <dbReference type="ChEBI" id="CHEBI:58359"/>
    </reaction>
</comment>
<comment type="pathway">
    <text evidence="1">Amino-acid biosynthesis; L-arginine biosynthesis; carbamoyl phosphate from bicarbonate: step 1/1.</text>
</comment>
<comment type="pathway">
    <text evidence="1">Pyrimidine metabolism; UMP biosynthesis via de novo pathway; (S)-dihydroorotate from bicarbonate: step 1/3.</text>
</comment>
<comment type="subunit">
    <text evidence="1">Composed of two chains; the small (or glutamine) chain promotes the hydrolysis of glutamine to ammonia, which is used by the large (or ammonia) chain to synthesize carbamoyl phosphate. Tetramer of heterodimers (alpha,beta)4.</text>
</comment>
<comment type="similarity">
    <text evidence="1">Belongs to the CarA family.</text>
</comment>
<feature type="chain" id="PRO_0000112260" description="Carbamoyl phosphate synthase small chain">
    <location>
        <begin position="1"/>
        <end position="407"/>
    </location>
</feature>
<feature type="domain" description="Glutamine amidotransferase type-1" evidence="1">
    <location>
        <begin position="209"/>
        <end position="397"/>
    </location>
</feature>
<feature type="region of interest" description="CPSase" evidence="1">
    <location>
        <begin position="1"/>
        <end position="205"/>
    </location>
</feature>
<feature type="active site" description="Nucleophile" evidence="1">
    <location>
        <position position="286"/>
    </location>
</feature>
<feature type="active site" evidence="1">
    <location>
        <position position="370"/>
    </location>
</feature>
<feature type="active site" evidence="1">
    <location>
        <position position="372"/>
    </location>
</feature>
<feature type="binding site" evidence="1">
    <location>
        <position position="60"/>
    </location>
    <ligand>
        <name>L-glutamine</name>
        <dbReference type="ChEBI" id="CHEBI:58359"/>
    </ligand>
</feature>
<feature type="binding site" evidence="1">
    <location>
        <position position="257"/>
    </location>
    <ligand>
        <name>L-glutamine</name>
        <dbReference type="ChEBI" id="CHEBI:58359"/>
    </ligand>
</feature>
<feature type="binding site" evidence="1">
    <location>
        <position position="259"/>
    </location>
    <ligand>
        <name>L-glutamine</name>
        <dbReference type="ChEBI" id="CHEBI:58359"/>
    </ligand>
</feature>
<feature type="binding site" evidence="1">
    <location>
        <position position="287"/>
    </location>
    <ligand>
        <name>L-glutamine</name>
        <dbReference type="ChEBI" id="CHEBI:58359"/>
    </ligand>
</feature>
<feature type="binding site" evidence="1">
    <location>
        <position position="290"/>
    </location>
    <ligand>
        <name>L-glutamine</name>
        <dbReference type="ChEBI" id="CHEBI:58359"/>
    </ligand>
</feature>
<feature type="binding site" evidence="1">
    <location>
        <position position="328"/>
    </location>
    <ligand>
        <name>L-glutamine</name>
        <dbReference type="ChEBI" id="CHEBI:58359"/>
    </ligand>
</feature>
<feature type="binding site" evidence="1">
    <location>
        <position position="330"/>
    </location>
    <ligand>
        <name>L-glutamine</name>
        <dbReference type="ChEBI" id="CHEBI:58359"/>
    </ligand>
</feature>
<feature type="binding site" evidence="1">
    <location>
        <position position="331"/>
    </location>
    <ligand>
        <name>L-glutamine</name>
        <dbReference type="ChEBI" id="CHEBI:58359"/>
    </ligand>
</feature>
<proteinExistence type="inferred from homology"/>
<keyword id="KW-0028">Amino-acid biosynthesis</keyword>
<keyword id="KW-0055">Arginine biosynthesis</keyword>
<keyword id="KW-0067">ATP-binding</keyword>
<keyword id="KW-0315">Glutamine amidotransferase</keyword>
<keyword id="KW-0436">Ligase</keyword>
<keyword id="KW-0547">Nucleotide-binding</keyword>
<keyword id="KW-0665">Pyrimidine biosynthesis</keyword>
<accession>Q8FZJ8</accession>
<accession>G0KBP1</accession>
<name>CARA_BRUSU</name>
<sequence>MTETTPKTAPWTVQKRTAVLVLADGTVIEGKGLGATGAVEAEVVFNTALTGYEEILTDPSYAGQIVTFTFPHIGNVGANAEDIEDLTPANRHGAVGAIFKADITAPSNFRAAEDLDSWLKHRGIIALAGIDTRALTALIRERGAQNAVIAHDPNGNFDLDALKARAANWCGLENLDLAKDVTIGQSLVWKELPWTLQDGYGEQDAPQYHVVALDFGVKRNILRLLTGLGAKVTVLPATATAEDVLAHNPDGVFLSNGPGDPAATGEYAVPTIGKLVETGIPLFGICLGHQMLALALGGRTEKMHQGHHGANHPVKDYTTGKVEIVSMNHGFAVDSDSLPENVEETHVSLFDGTNCGLRVVGKPVFSVQHHPEASPGPQDSHYLFRRFINLIRERKGQAPLPEREQAA</sequence>
<organism>
    <name type="scientific">Brucella suis biovar 1 (strain 1330)</name>
    <dbReference type="NCBI Taxonomy" id="204722"/>
    <lineage>
        <taxon>Bacteria</taxon>
        <taxon>Pseudomonadati</taxon>
        <taxon>Pseudomonadota</taxon>
        <taxon>Alphaproteobacteria</taxon>
        <taxon>Hyphomicrobiales</taxon>
        <taxon>Brucellaceae</taxon>
        <taxon>Brucella/Ochrobactrum group</taxon>
        <taxon>Brucella</taxon>
    </lineage>
</organism>
<reference key="1">
    <citation type="journal article" date="2002" name="Proc. Natl. Acad. Sci. U.S.A.">
        <title>The Brucella suis genome reveals fundamental similarities between animal and plant pathogens and symbionts.</title>
        <authorList>
            <person name="Paulsen I.T."/>
            <person name="Seshadri R."/>
            <person name="Nelson K.E."/>
            <person name="Eisen J.A."/>
            <person name="Heidelberg J.F."/>
            <person name="Read T.D."/>
            <person name="Dodson R.J."/>
            <person name="Umayam L.A."/>
            <person name="Brinkac L.M."/>
            <person name="Beanan M.J."/>
            <person name="Daugherty S.C."/>
            <person name="DeBoy R.T."/>
            <person name="Durkin A.S."/>
            <person name="Kolonay J.F."/>
            <person name="Madupu R."/>
            <person name="Nelson W.C."/>
            <person name="Ayodeji B."/>
            <person name="Kraul M."/>
            <person name="Shetty J."/>
            <person name="Malek J.A."/>
            <person name="Van Aken S.E."/>
            <person name="Riedmuller S."/>
            <person name="Tettelin H."/>
            <person name="Gill S.R."/>
            <person name="White O."/>
            <person name="Salzberg S.L."/>
            <person name="Hoover D.L."/>
            <person name="Lindler L.E."/>
            <person name="Halling S.M."/>
            <person name="Boyle S.M."/>
            <person name="Fraser C.M."/>
        </authorList>
    </citation>
    <scope>NUCLEOTIDE SEQUENCE [LARGE SCALE GENOMIC DNA]</scope>
    <source>
        <strain>1330</strain>
    </source>
</reference>
<reference key="2">
    <citation type="journal article" date="2011" name="J. Bacteriol.">
        <title>Revised genome sequence of Brucella suis 1330.</title>
        <authorList>
            <person name="Tae H."/>
            <person name="Shallom S."/>
            <person name="Settlage R."/>
            <person name="Preston D."/>
            <person name="Adams L.G."/>
            <person name="Garner H.R."/>
        </authorList>
    </citation>
    <scope>NUCLEOTIDE SEQUENCE [LARGE SCALE GENOMIC DNA]</scope>
    <source>
        <strain>1330</strain>
    </source>
</reference>
<evidence type="ECO:0000255" key="1">
    <source>
        <dbReference type="HAMAP-Rule" id="MF_01209"/>
    </source>
</evidence>
<dbReference type="EC" id="6.3.5.5" evidence="1"/>
<dbReference type="EMBL" id="AE014291">
    <property type="protein sequence ID" value="AAN30394.1"/>
    <property type="molecule type" value="Genomic_DNA"/>
</dbReference>
<dbReference type="EMBL" id="CP002997">
    <property type="protein sequence ID" value="AEM18810.1"/>
    <property type="molecule type" value="Genomic_DNA"/>
</dbReference>
<dbReference type="RefSeq" id="WP_004691011.1">
    <property type="nucleotide sequence ID" value="NZ_KN046804.1"/>
</dbReference>
<dbReference type="SMR" id="Q8FZJ8"/>
<dbReference type="MEROPS" id="C26.954"/>
<dbReference type="GeneID" id="55591131"/>
<dbReference type="KEGG" id="bms:BR1483"/>
<dbReference type="KEGG" id="bsi:BS1330_I1477"/>
<dbReference type="PATRIC" id="fig|204722.21.peg.3592"/>
<dbReference type="HOGENOM" id="CLU_035901_2_2_5"/>
<dbReference type="PhylomeDB" id="Q8FZJ8"/>
<dbReference type="UniPathway" id="UPA00068">
    <property type="reaction ID" value="UER00171"/>
</dbReference>
<dbReference type="UniPathway" id="UPA00070">
    <property type="reaction ID" value="UER00115"/>
</dbReference>
<dbReference type="Proteomes" id="UP000007104">
    <property type="component" value="Chromosome I"/>
</dbReference>
<dbReference type="GO" id="GO:0005524">
    <property type="term" value="F:ATP binding"/>
    <property type="evidence" value="ECO:0007669"/>
    <property type="project" value="UniProtKB-UniRule"/>
</dbReference>
<dbReference type="GO" id="GO:0004088">
    <property type="term" value="F:carbamoyl-phosphate synthase (glutamine-hydrolyzing) activity"/>
    <property type="evidence" value="ECO:0007669"/>
    <property type="project" value="UniProtKB-UniRule"/>
</dbReference>
<dbReference type="GO" id="GO:0004359">
    <property type="term" value="F:glutaminase activity"/>
    <property type="evidence" value="ECO:0007669"/>
    <property type="project" value="RHEA"/>
</dbReference>
<dbReference type="GO" id="GO:0006207">
    <property type="term" value="P:'de novo' pyrimidine nucleobase biosynthetic process"/>
    <property type="evidence" value="ECO:0007669"/>
    <property type="project" value="InterPro"/>
</dbReference>
<dbReference type="GO" id="GO:0044205">
    <property type="term" value="P:'de novo' UMP biosynthetic process"/>
    <property type="evidence" value="ECO:0007669"/>
    <property type="project" value="UniProtKB-UniRule"/>
</dbReference>
<dbReference type="GO" id="GO:0006541">
    <property type="term" value="P:glutamine metabolic process"/>
    <property type="evidence" value="ECO:0007669"/>
    <property type="project" value="InterPro"/>
</dbReference>
<dbReference type="GO" id="GO:0006526">
    <property type="term" value="P:L-arginine biosynthetic process"/>
    <property type="evidence" value="ECO:0007669"/>
    <property type="project" value="UniProtKB-UniRule"/>
</dbReference>
<dbReference type="CDD" id="cd01744">
    <property type="entry name" value="GATase1_CPSase"/>
    <property type="match status" value="1"/>
</dbReference>
<dbReference type="FunFam" id="3.50.30.20:FF:000001">
    <property type="entry name" value="Carbamoyl-phosphate synthase small chain"/>
    <property type="match status" value="1"/>
</dbReference>
<dbReference type="Gene3D" id="3.40.50.880">
    <property type="match status" value="1"/>
</dbReference>
<dbReference type="Gene3D" id="3.50.30.20">
    <property type="entry name" value="Carbamoyl-phosphate synthase small subunit, N-terminal domain"/>
    <property type="match status" value="1"/>
</dbReference>
<dbReference type="HAMAP" id="MF_01209">
    <property type="entry name" value="CPSase_S_chain"/>
    <property type="match status" value="1"/>
</dbReference>
<dbReference type="InterPro" id="IPR050472">
    <property type="entry name" value="Anth_synth/Amidotransfase"/>
</dbReference>
<dbReference type="InterPro" id="IPR006274">
    <property type="entry name" value="CarbamoylP_synth_ssu"/>
</dbReference>
<dbReference type="InterPro" id="IPR002474">
    <property type="entry name" value="CarbamoylP_synth_ssu_N"/>
</dbReference>
<dbReference type="InterPro" id="IPR036480">
    <property type="entry name" value="CarbP_synth_ssu_N_sf"/>
</dbReference>
<dbReference type="InterPro" id="IPR029062">
    <property type="entry name" value="Class_I_gatase-like"/>
</dbReference>
<dbReference type="InterPro" id="IPR035686">
    <property type="entry name" value="CPSase_GATase1"/>
</dbReference>
<dbReference type="InterPro" id="IPR017926">
    <property type="entry name" value="GATASE"/>
</dbReference>
<dbReference type="NCBIfam" id="TIGR01368">
    <property type="entry name" value="CPSaseIIsmall"/>
    <property type="match status" value="1"/>
</dbReference>
<dbReference type="NCBIfam" id="NF009475">
    <property type="entry name" value="PRK12838.1"/>
    <property type="match status" value="1"/>
</dbReference>
<dbReference type="PANTHER" id="PTHR43418:SF7">
    <property type="entry name" value="CARBAMOYL-PHOSPHATE SYNTHASE SMALL CHAIN"/>
    <property type="match status" value="1"/>
</dbReference>
<dbReference type="PANTHER" id="PTHR43418">
    <property type="entry name" value="MULTIFUNCTIONAL TRYPTOPHAN BIOSYNTHESIS PROTEIN-RELATED"/>
    <property type="match status" value="1"/>
</dbReference>
<dbReference type="Pfam" id="PF00988">
    <property type="entry name" value="CPSase_sm_chain"/>
    <property type="match status" value="1"/>
</dbReference>
<dbReference type="Pfam" id="PF00117">
    <property type="entry name" value="GATase"/>
    <property type="match status" value="1"/>
</dbReference>
<dbReference type="PRINTS" id="PR00097">
    <property type="entry name" value="ANTSNTHASEII"/>
</dbReference>
<dbReference type="PRINTS" id="PR00099">
    <property type="entry name" value="CPSGATASE"/>
</dbReference>
<dbReference type="PRINTS" id="PR00096">
    <property type="entry name" value="GATASE"/>
</dbReference>
<dbReference type="SMART" id="SM01097">
    <property type="entry name" value="CPSase_sm_chain"/>
    <property type="match status" value="1"/>
</dbReference>
<dbReference type="SUPFAM" id="SSF52021">
    <property type="entry name" value="Carbamoyl phosphate synthetase, small subunit N-terminal domain"/>
    <property type="match status" value="1"/>
</dbReference>
<dbReference type="SUPFAM" id="SSF52317">
    <property type="entry name" value="Class I glutamine amidotransferase-like"/>
    <property type="match status" value="1"/>
</dbReference>
<dbReference type="PROSITE" id="PS51273">
    <property type="entry name" value="GATASE_TYPE_1"/>
    <property type="match status" value="1"/>
</dbReference>